<sequence length="119" mass="14051">MESKEELAANNLNGENAQQENEGREQAPTQNEETRHLGGGEGQKPGGNIRRGRVRRLVPNFRWAIPNRHIEHNEARDDVERFVGQMMEIKRKTREQQMRHYMRFQTPEPDNHYDFCLIP</sequence>
<reference key="1">
    <citation type="submission" date="2004-11" db="EMBL/GenBank/DDBJ databases">
        <authorList>
            <consortium name="The German cDNA consortium"/>
        </authorList>
    </citation>
    <scope>NUCLEOTIDE SEQUENCE [LARGE SCALE MRNA]</scope>
    <source>
        <tissue>Brain cortex</tissue>
    </source>
</reference>
<dbReference type="EMBL" id="CR860974">
    <property type="protein sequence ID" value="CAH93076.1"/>
    <property type="molecule type" value="mRNA"/>
</dbReference>
<dbReference type="EMBL" id="CR860614">
    <property type="protein sequence ID" value="CAH92735.1"/>
    <property type="molecule type" value="mRNA"/>
</dbReference>
<dbReference type="RefSeq" id="NP_001126822.1">
    <property type="nucleotide sequence ID" value="NM_001133350.1"/>
</dbReference>
<dbReference type="SMR" id="Q5R590"/>
<dbReference type="FunCoup" id="Q5R590">
    <property type="interactions" value="196"/>
</dbReference>
<dbReference type="Ensembl" id="ENSPPYT00000024000.2">
    <property type="protein sequence ID" value="ENSPPYP00000023031.2"/>
    <property type="gene ID" value="ENSPPYG00000020575.2"/>
</dbReference>
<dbReference type="GeneID" id="100173827"/>
<dbReference type="KEGG" id="pon:100173827"/>
<dbReference type="CTD" id="56271"/>
<dbReference type="eggNOG" id="ENOG502TDUR">
    <property type="taxonomic scope" value="Eukaryota"/>
</dbReference>
<dbReference type="GeneTree" id="ENSGT00940000162932"/>
<dbReference type="HOGENOM" id="CLU_123122_1_0_1"/>
<dbReference type="InParanoid" id="Q5R590"/>
<dbReference type="OMA" id="WAIPSRH"/>
<dbReference type="OrthoDB" id="9836927at2759"/>
<dbReference type="Proteomes" id="UP000001595">
    <property type="component" value="Chromosome X"/>
</dbReference>
<dbReference type="GO" id="GO:0005737">
    <property type="term" value="C:cytoplasm"/>
    <property type="evidence" value="ECO:0000250"/>
    <property type="project" value="UniProtKB"/>
</dbReference>
<dbReference type="GO" id="GO:0005829">
    <property type="term" value="C:cytosol"/>
    <property type="evidence" value="ECO:0007669"/>
    <property type="project" value="Ensembl"/>
</dbReference>
<dbReference type="GO" id="GO:0005874">
    <property type="term" value="C:microtubule"/>
    <property type="evidence" value="ECO:0000250"/>
    <property type="project" value="UniProtKB"/>
</dbReference>
<dbReference type="GO" id="GO:0005654">
    <property type="term" value="C:nucleoplasm"/>
    <property type="evidence" value="ECO:0007669"/>
    <property type="project" value="Ensembl"/>
</dbReference>
<dbReference type="GO" id="GO:0005634">
    <property type="term" value="C:nucleus"/>
    <property type="evidence" value="ECO:0000250"/>
    <property type="project" value="UniProtKB"/>
</dbReference>
<dbReference type="GO" id="GO:0000922">
    <property type="term" value="C:spindle pole"/>
    <property type="evidence" value="ECO:0000250"/>
    <property type="project" value="UniProtKB"/>
</dbReference>
<dbReference type="GO" id="GO:0043014">
    <property type="term" value="F:alpha-tubulin binding"/>
    <property type="evidence" value="ECO:0000250"/>
    <property type="project" value="UniProtKB"/>
</dbReference>
<dbReference type="GO" id="GO:0042826">
    <property type="term" value="F:histone deacetylase binding"/>
    <property type="evidence" value="ECO:0007669"/>
    <property type="project" value="Ensembl"/>
</dbReference>
<dbReference type="GO" id="GO:0046872">
    <property type="term" value="F:metal ion binding"/>
    <property type="evidence" value="ECO:0007669"/>
    <property type="project" value="UniProtKB-KW"/>
</dbReference>
<dbReference type="GO" id="GO:0140678">
    <property type="term" value="F:molecular function inhibitor activity"/>
    <property type="evidence" value="ECO:0000250"/>
    <property type="project" value="UniProtKB"/>
</dbReference>
<dbReference type="GO" id="GO:0007059">
    <property type="term" value="P:chromosome segregation"/>
    <property type="evidence" value="ECO:0000250"/>
    <property type="project" value="UniProtKB"/>
</dbReference>
<dbReference type="GO" id="GO:0031397">
    <property type="term" value="P:negative regulation of protein ubiquitination"/>
    <property type="evidence" value="ECO:0000250"/>
    <property type="project" value="UniProtKB"/>
</dbReference>
<dbReference type="GO" id="GO:1904428">
    <property type="term" value="P:negative regulation of tubulin deacetylation"/>
    <property type="evidence" value="ECO:0000250"/>
    <property type="project" value="UniProtKB"/>
</dbReference>
<dbReference type="GO" id="GO:0030334">
    <property type="term" value="P:regulation of cell migration"/>
    <property type="evidence" value="ECO:0007669"/>
    <property type="project" value="Ensembl"/>
</dbReference>
<dbReference type="GO" id="GO:0042127">
    <property type="term" value="P:regulation of cell population proliferation"/>
    <property type="evidence" value="ECO:0007669"/>
    <property type="project" value="Ensembl"/>
</dbReference>
<dbReference type="InterPro" id="IPR007623">
    <property type="entry name" value="BEX"/>
</dbReference>
<dbReference type="InterPro" id="IPR021156">
    <property type="entry name" value="TF_A-like/BEX"/>
</dbReference>
<dbReference type="PANTHER" id="PTHR13987">
    <property type="entry name" value="PROTEIN BEX4"/>
    <property type="match status" value="1"/>
</dbReference>
<dbReference type="PANTHER" id="PTHR13987:SF3">
    <property type="entry name" value="PROTEIN BEX4"/>
    <property type="match status" value="1"/>
</dbReference>
<dbReference type="Pfam" id="PF04538">
    <property type="entry name" value="BEX"/>
    <property type="match status" value="1"/>
</dbReference>
<dbReference type="PIRSF" id="PIRSF008633">
    <property type="entry name" value="BEX"/>
    <property type="match status" value="1"/>
</dbReference>
<name>BEX4_PONAB</name>
<organism>
    <name type="scientific">Pongo abelii</name>
    <name type="common">Sumatran orangutan</name>
    <name type="synonym">Pongo pygmaeus abelii</name>
    <dbReference type="NCBI Taxonomy" id="9601"/>
    <lineage>
        <taxon>Eukaryota</taxon>
        <taxon>Metazoa</taxon>
        <taxon>Chordata</taxon>
        <taxon>Craniata</taxon>
        <taxon>Vertebrata</taxon>
        <taxon>Euteleostomi</taxon>
        <taxon>Mammalia</taxon>
        <taxon>Eutheria</taxon>
        <taxon>Euarchontoglires</taxon>
        <taxon>Primates</taxon>
        <taxon>Haplorrhini</taxon>
        <taxon>Catarrhini</taxon>
        <taxon>Hominidae</taxon>
        <taxon>Pongo</taxon>
    </lineage>
</organism>
<accession>Q5R590</accession>
<proteinExistence type="inferred from homology"/>
<keyword id="KW-0963">Cytoplasm</keyword>
<keyword id="KW-0206">Cytoskeleton</keyword>
<keyword id="KW-0479">Metal-binding</keyword>
<keyword id="KW-0539">Nucleus</keyword>
<keyword id="KW-1185">Reference proteome</keyword>
<keyword id="KW-0832">Ubl conjugation</keyword>
<keyword id="KW-0862">Zinc</keyword>
<comment type="function">
    <text evidence="2 3">May play a role in microtubule deacetylation by negatively regulating the SIRT2 deacetylase activity toward alpha-tubulin and thereby participate in the control of cell cycle progression and genomic stability (By similarity). In absence of reductive stress, acts as a pseudosubstrate for the CRL2(FEM1B) complex: associates with FEM1B via zinc, thereby preventing association between FEM1B and its substrates (By similarity).</text>
</comment>
<comment type="subunit">
    <text evidence="3">Interacts with alpha-tubulin. Interacts with SIRT2.</text>
</comment>
<comment type="subcellular location">
    <subcellularLocation>
        <location evidence="3">Cytoplasm</location>
        <location evidence="3">Cytoskeleton</location>
        <location evidence="3">Spindle pole</location>
    </subcellularLocation>
    <subcellularLocation>
        <location evidence="3">Nucleus</location>
    </subcellularLocation>
    <subcellularLocation>
        <location evidence="3">Cytoplasm</location>
    </subcellularLocation>
    <text evidence="3">Also localizes to microtubules.</text>
</comment>
<comment type="PTM">
    <text evidence="1">Ubiquitinated and degraded by the proteasome.</text>
</comment>
<comment type="similarity">
    <text evidence="6">Belongs to the BEX family.</text>
</comment>
<evidence type="ECO:0000250" key="1">
    <source>
        <dbReference type="UniProtKB" id="Q3MKP9"/>
    </source>
</evidence>
<evidence type="ECO:0000250" key="2">
    <source>
        <dbReference type="UniProtKB" id="Q9CWT2"/>
    </source>
</evidence>
<evidence type="ECO:0000250" key="3">
    <source>
        <dbReference type="UniProtKB" id="Q9NWD9"/>
    </source>
</evidence>
<evidence type="ECO:0000250" key="4">
    <source>
        <dbReference type="UniProtKB" id="Q9WTZ9"/>
    </source>
</evidence>
<evidence type="ECO:0000256" key="5">
    <source>
        <dbReference type="SAM" id="MobiDB-lite"/>
    </source>
</evidence>
<evidence type="ECO:0000305" key="6"/>
<protein>
    <recommendedName>
        <fullName evidence="6">Protein BEX4</fullName>
    </recommendedName>
    <alternativeName>
        <fullName evidence="3">Brain-expressed X-linked protein 4 homolog</fullName>
    </alternativeName>
</protein>
<feature type="chain" id="PRO_0000229785" description="Protein BEX4">
    <location>
        <begin position="1"/>
        <end position="119"/>
    </location>
</feature>
<feature type="region of interest" description="Disordered" evidence="5">
    <location>
        <begin position="1"/>
        <end position="53"/>
    </location>
</feature>
<feature type="region of interest" description="Interaction with alpha-tubulin" evidence="3">
    <location>
        <begin position="31"/>
        <end position="119"/>
    </location>
</feature>
<feature type="region of interest" description="Interaction with SIRT2" evidence="3">
    <location>
        <begin position="31"/>
        <end position="89"/>
    </location>
</feature>
<feature type="compositionally biased region" description="Low complexity" evidence="5">
    <location>
        <begin position="8"/>
        <end position="20"/>
    </location>
</feature>
<feature type="binding site" evidence="4">
    <location>
        <position position="116"/>
    </location>
    <ligand>
        <name>Zn(2+)</name>
        <dbReference type="ChEBI" id="CHEBI:29105"/>
        <note>ligand shared with FEM1B</note>
    </ligand>
</feature>
<gene>
    <name evidence="3" type="primary">BEX4</name>
</gene>